<name>PUTP_HAEIN</name>
<sequence length="504" mass="54899">MFGFDPSLITFTIYIFGMLLIGVLAYYYTNNLSDYILGGRRLGSFVTAMSAGASDMSGWLLMGLPGAVYLSGLVEGWIAIGLTIGAYFNWLLVAGRLRVYTELNNNALTLPEYFHNRFGSSHKLLKLVSATIILVFLTIYCASGVVAGAKLFQNIFSVEYSTALWYGAAATIAYTFIGGFLAVSWTDTIQATLMIFALILTPVFVLLSFADTAQFSAVLEQAEAAVNKDFTDLFTSTTPLGLLSLAAWGLGYFGQPHILARFMAADSVKSLIKARRISMGWMVLCLAGAIGIGLFAIPYFFANPAIAGTVNREPEQVFIELAKLLFNPWIAGILLSAILAAVMSTLSAQLLISSSSITEDFYKGFIRPNASEKELVWLGRIMVLVIAALAIWIAQDENSKVLKLVEFAWAGFGSAFGPVVLFSLFWKRMTSSGAMAGMLVGAVTVFAWKEVVPADTDWFKVYEMIPGFAFASLAIIVISLLSNKPEQDILNTFDKAEKAYKEAK</sequence>
<protein>
    <recommendedName>
        <fullName evidence="1">Sodium/proline symporter</fullName>
    </recommendedName>
    <alternativeName>
        <fullName>Proline permease</fullName>
    </alternativeName>
</protein>
<feature type="chain" id="PRO_0000105399" description="Sodium/proline symporter">
    <location>
        <begin position="1"/>
        <end position="504"/>
    </location>
</feature>
<feature type="transmembrane region" description="Helical" evidence="2">
    <location>
        <begin position="8"/>
        <end position="28"/>
    </location>
</feature>
<feature type="transmembrane region" description="Helical" evidence="2">
    <location>
        <begin position="50"/>
        <end position="70"/>
    </location>
</feature>
<feature type="transmembrane region" description="Helical" evidence="2">
    <location>
        <begin position="73"/>
        <end position="93"/>
    </location>
</feature>
<feature type="transmembrane region" description="Helical" evidence="2">
    <location>
        <begin position="127"/>
        <end position="147"/>
    </location>
</feature>
<feature type="transmembrane region" description="Helical" evidence="2">
    <location>
        <begin position="163"/>
        <end position="183"/>
    </location>
</feature>
<feature type="transmembrane region" description="Helical" evidence="2">
    <location>
        <begin position="189"/>
        <end position="209"/>
    </location>
</feature>
<feature type="transmembrane region" description="Helical" evidence="2">
    <location>
        <begin position="240"/>
        <end position="260"/>
    </location>
</feature>
<feature type="transmembrane region" description="Helical" evidence="2">
    <location>
        <begin position="281"/>
        <end position="301"/>
    </location>
</feature>
<feature type="transmembrane region" description="Helical" evidence="2">
    <location>
        <begin position="324"/>
        <end position="344"/>
    </location>
</feature>
<feature type="transmembrane region" description="Helical" evidence="2">
    <location>
        <begin position="374"/>
        <end position="394"/>
    </location>
</feature>
<feature type="transmembrane region" description="Helical" evidence="2">
    <location>
        <begin position="405"/>
        <end position="425"/>
    </location>
</feature>
<feature type="transmembrane region" description="Helical" evidence="2">
    <location>
        <begin position="434"/>
        <end position="454"/>
    </location>
</feature>
<feature type="transmembrane region" description="Helical" evidence="2">
    <location>
        <begin position="461"/>
        <end position="481"/>
    </location>
</feature>
<evidence type="ECO:0000250" key="1">
    <source>
        <dbReference type="UniProtKB" id="P07117"/>
    </source>
</evidence>
<evidence type="ECO:0000255" key="2"/>
<evidence type="ECO:0000305" key="3"/>
<comment type="function">
    <text evidence="1">Catalyzes the sodium-dependent uptake of extracellular L-proline.</text>
</comment>
<comment type="catalytic activity">
    <reaction evidence="1">
        <text>L-proline(in) + Na(+)(in) = L-proline(out) + Na(+)(out)</text>
        <dbReference type="Rhea" id="RHEA:28967"/>
        <dbReference type="ChEBI" id="CHEBI:29101"/>
        <dbReference type="ChEBI" id="CHEBI:60039"/>
    </reaction>
</comment>
<comment type="subcellular location">
    <subcellularLocation>
        <location evidence="1">Cell inner membrane</location>
        <topology evidence="2">Multi-pass membrane protein</topology>
    </subcellularLocation>
</comment>
<comment type="similarity">
    <text evidence="3">Belongs to the sodium:solute symporter (SSF) (TC 2.A.21) family.</text>
</comment>
<accession>P45174</accession>
<gene>
    <name type="primary">putP</name>
    <name type="ordered locus">HI_1352</name>
</gene>
<keyword id="KW-0029">Amino-acid transport</keyword>
<keyword id="KW-0997">Cell inner membrane</keyword>
<keyword id="KW-1003">Cell membrane</keyword>
<keyword id="KW-0406">Ion transport</keyword>
<keyword id="KW-0472">Membrane</keyword>
<keyword id="KW-1185">Reference proteome</keyword>
<keyword id="KW-0915">Sodium</keyword>
<keyword id="KW-0739">Sodium transport</keyword>
<keyword id="KW-0769">Symport</keyword>
<keyword id="KW-0812">Transmembrane</keyword>
<keyword id="KW-1133">Transmembrane helix</keyword>
<keyword id="KW-0813">Transport</keyword>
<dbReference type="EMBL" id="L42023">
    <property type="protein sequence ID" value="AAC22999.1"/>
    <property type="molecule type" value="Genomic_DNA"/>
</dbReference>
<dbReference type="PIR" id="E64118">
    <property type="entry name" value="E64118"/>
</dbReference>
<dbReference type="RefSeq" id="NP_439503.1">
    <property type="nucleotide sequence ID" value="NC_000907.1"/>
</dbReference>
<dbReference type="SMR" id="P45174"/>
<dbReference type="STRING" id="71421.HI_1352"/>
<dbReference type="EnsemblBacteria" id="AAC22999">
    <property type="protein sequence ID" value="AAC22999"/>
    <property type="gene ID" value="HI_1352"/>
</dbReference>
<dbReference type="KEGG" id="hin:HI_1352"/>
<dbReference type="PATRIC" id="fig|71421.8.peg.1405"/>
<dbReference type="eggNOG" id="COG0591">
    <property type="taxonomic scope" value="Bacteria"/>
</dbReference>
<dbReference type="HOGENOM" id="CLU_018808_15_2_6"/>
<dbReference type="OrthoDB" id="9789704at2"/>
<dbReference type="PhylomeDB" id="P45174"/>
<dbReference type="BioCyc" id="HINF71421:G1GJ1-1377-MONOMER"/>
<dbReference type="Proteomes" id="UP000000579">
    <property type="component" value="Chromosome"/>
</dbReference>
<dbReference type="GO" id="GO:0005886">
    <property type="term" value="C:plasma membrane"/>
    <property type="evidence" value="ECO:0000318"/>
    <property type="project" value="GO_Central"/>
</dbReference>
<dbReference type="GO" id="GO:0015193">
    <property type="term" value="F:L-proline transmembrane transporter activity"/>
    <property type="evidence" value="ECO:0000318"/>
    <property type="project" value="GO_Central"/>
</dbReference>
<dbReference type="GO" id="GO:0005298">
    <property type="term" value="F:proline:sodium symporter activity"/>
    <property type="evidence" value="ECO:0000318"/>
    <property type="project" value="GO_Central"/>
</dbReference>
<dbReference type="GO" id="GO:0031402">
    <property type="term" value="F:sodium ion binding"/>
    <property type="evidence" value="ECO:0007669"/>
    <property type="project" value="InterPro"/>
</dbReference>
<dbReference type="GO" id="GO:0015824">
    <property type="term" value="P:proline transport"/>
    <property type="evidence" value="ECO:0000318"/>
    <property type="project" value="GO_Central"/>
</dbReference>
<dbReference type="GO" id="GO:0055085">
    <property type="term" value="P:transmembrane transport"/>
    <property type="evidence" value="ECO:0000318"/>
    <property type="project" value="GO_Central"/>
</dbReference>
<dbReference type="CDD" id="cd11475">
    <property type="entry name" value="SLC5sbd_PutP"/>
    <property type="match status" value="1"/>
</dbReference>
<dbReference type="FunFam" id="1.20.1730.10:FF:000002">
    <property type="entry name" value="Sodium/proline symporter"/>
    <property type="match status" value="1"/>
</dbReference>
<dbReference type="Gene3D" id="1.20.1730.10">
    <property type="entry name" value="Sodium/glucose cotransporter"/>
    <property type="match status" value="1"/>
</dbReference>
<dbReference type="InterPro" id="IPR038377">
    <property type="entry name" value="Na/Glc_symporter_sf"/>
</dbReference>
<dbReference type="InterPro" id="IPR011851">
    <property type="entry name" value="Na/Pro_symporter"/>
</dbReference>
<dbReference type="InterPro" id="IPR001734">
    <property type="entry name" value="Na/solute_symporter"/>
</dbReference>
<dbReference type="InterPro" id="IPR018212">
    <property type="entry name" value="Na/solute_symporter_CS"/>
</dbReference>
<dbReference type="InterPro" id="IPR050277">
    <property type="entry name" value="Sodium:Solute_Symporter"/>
</dbReference>
<dbReference type="NCBIfam" id="TIGR02121">
    <property type="entry name" value="Na_Pro_sym"/>
    <property type="match status" value="1"/>
</dbReference>
<dbReference type="NCBIfam" id="TIGR00813">
    <property type="entry name" value="sss"/>
    <property type="match status" value="1"/>
</dbReference>
<dbReference type="PANTHER" id="PTHR48086">
    <property type="entry name" value="SODIUM/PROLINE SYMPORTER-RELATED"/>
    <property type="match status" value="1"/>
</dbReference>
<dbReference type="PANTHER" id="PTHR48086:SF3">
    <property type="entry name" value="SODIUM_PROLINE SYMPORTER"/>
    <property type="match status" value="1"/>
</dbReference>
<dbReference type="Pfam" id="PF00474">
    <property type="entry name" value="SSF"/>
    <property type="match status" value="1"/>
</dbReference>
<dbReference type="PROSITE" id="PS00456">
    <property type="entry name" value="NA_SOLUT_SYMP_1"/>
    <property type="match status" value="1"/>
</dbReference>
<dbReference type="PROSITE" id="PS00457">
    <property type="entry name" value="NA_SOLUT_SYMP_2"/>
    <property type="match status" value="1"/>
</dbReference>
<dbReference type="PROSITE" id="PS50283">
    <property type="entry name" value="NA_SOLUT_SYMP_3"/>
    <property type="match status" value="1"/>
</dbReference>
<organism>
    <name type="scientific">Haemophilus influenzae (strain ATCC 51907 / DSM 11121 / KW20 / Rd)</name>
    <dbReference type="NCBI Taxonomy" id="71421"/>
    <lineage>
        <taxon>Bacteria</taxon>
        <taxon>Pseudomonadati</taxon>
        <taxon>Pseudomonadota</taxon>
        <taxon>Gammaproteobacteria</taxon>
        <taxon>Pasteurellales</taxon>
        <taxon>Pasteurellaceae</taxon>
        <taxon>Haemophilus</taxon>
    </lineage>
</organism>
<proteinExistence type="inferred from homology"/>
<reference key="1">
    <citation type="journal article" date="1995" name="Science">
        <title>Whole-genome random sequencing and assembly of Haemophilus influenzae Rd.</title>
        <authorList>
            <person name="Fleischmann R.D."/>
            <person name="Adams M.D."/>
            <person name="White O."/>
            <person name="Clayton R.A."/>
            <person name="Kirkness E.F."/>
            <person name="Kerlavage A.R."/>
            <person name="Bult C.J."/>
            <person name="Tomb J.-F."/>
            <person name="Dougherty B.A."/>
            <person name="Merrick J.M."/>
            <person name="McKenney K."/>
            <person name="Sutton G.G."/>
            <person name="FitzHugh W."/>
            <person name="Fields C.A."/>
            <person name="Gocayne J.D."/>
            <person name="Scott J.D."/>
            <person name="Shirley R."/>
            <person name="Liu L.-I."/>
            <person name="Glodek A."/>
            <person name="Kelley J.M."/>
            <person name="Weidman J.F."/>
            <person name="Phillips C.A."/>
            <person name="Spriggs T."/>
            <person name="Hedblom E."/>
            <person name="Cotton M.D."/>
            <person name="Utterback T.R."/>
            <person name="Hanna M.C."/>
            <person name="Nguyen D.T."/>
            <person name="Saudek D.M."/>
            <person name="Brandon R.C."/>
            <person name="Fine L.D."/>
            <person name="Fritchman J.L."/>
            <person name="Fuhrmann J.L."/>
            <person name="Geoghagen N.S.M."/>
            <person name="Gnehm C.L."/>
            <person name="McDonald L.A."/>
            <person name="Small K.V."/>
            <person name="Fraser C.M."/>
            <person name="Smith H.O."/>
            <person name="Venter J.C."/>
        </authorList>
    </citation>
    <scope>NUCLEOTIDE SEQUENCE [LARGE SCALE GENOMIC DNA]</scope>
    <source>
        <strain>ATCC 51907 / DSM 11121 / KW20 / Rd</strain>
    </source>
</reference>